<accession>A4TQ82</accession>
<dbReference type="EC" id="6.3.2.8" evidence="1"/>
<dbReference type="EMBL" id="CP000668">
    <property type="protein sequence ID" value="ABP41444.1"/>
    <property type="status" value="ALT_INIT"/>
    <property type="molecule type" value="Genomic_DNA"/>
</dbReference>
<dbReference type="RefSeq" id="WP_002216457.1">
    <property type="nucleotide sequence ID" value="NZ_CP009715.1"/>
</dbReference>
<dbReference type="SMR" id="A4TQ82"/>
<dbReference type="GeneID" id="57974059"/>
<dbReference type="KEGG" id="ypp:YPDSF_3086"/>
<dbReference type="PATRIC" id="fig|386656.14.peg.1274"/>
<dbReference type="UniPathway" id="UPA00219"/>
<dbReference type="GO" id="GO:0005737">
    <property type="term" value="C:cytoplasm"/>
    <property type="evidence" value="ECO:0007669"/>
    <property type="project" value="UniProtKB-SubCell"/>
</dbReference>
<dbReference type="GO" id="GO:0005524">
    <property type="term" value="F:ATP binding"/>
    <property type="evidence" value="ECO:0007669"/>
    <property type="project" value="UniProtKB-UniRule"/>
</dbReference>
<dbReference type="GO" id="GO:0008763">
    <property type="term" value="F:UDP-N-acetylmuramate-L-alanine ligase activity"/>
    <property type="evidence" value="ECO:0007669"/>
    <property type="project" value="UniProtKB-UniRule"/>
</dbReference>
<dbReference type="GO" id="GO:0051301">
    <property type="term" value="P:cell division"/>
    <property type="evidence" value="ECO:0007669"/>
    <property type="project" value="UniProtKB-KW"/>
</dbReference>
<dbReference type="GO" id="GO:0071555">
    <property type="term" value="P:cell wall organization"/>
    <property type="evidence" value="ECO:0007669"/>
    <property type="project" value="UniProtKB-KW"/>
</dbReference>
<dbReference type="GO" id="GO:0009252">
    <property type="term" value="P:peptidoglycan biosynthetic process"/>
    <property type="evidence" value="ECO:0007669"/>
    <property type="project" value="UniProtKB-UniRule"/>
</dbReference>
<dbReference type="GO" id="GO:0008360">
    <property type="term" value="P:regulation of cell shape"/>
    <property type="evidence" value="ECO:0007669"/>
    <property type="project" value="UniProtKB-KW"/>
</dbReference>
<dbReference type="CDD" id="cd01983">
    <property type="entry name" value="SIMIBI"/>
    <property type="match status" value="1"/>
</dbReference>
<dbReference type="FunFam" id="3.40.1190.10:FF:000001">
    <property type="entry name" value="UDP-N-acetylmuramate--L-alanine ligase"/>
    <property type="match status" value="1"/>
</dbReference>
<dbReference type="FunFam" id="3.40.50.720:FF:000046">
    <property type="entry name" value="UDP-N-acetylmuramate--L-alanine ligase"/>
    <property type="match status" value="1"/>
</dbReference>
<dbReference type="FunFam" id="3.90.190.20:FF:000001">
    <property type="entry name" value="UDP-N-acetylmuramate--L-alanine ligase"/>
    <property type="match status" value="1"/>
</dbReference>
<dbReference type="Gene3D" id="3.90.190.20">
    <property type="entry name" value="Mur ligase, C-terminal domain"/>
    <property type="match status" value="1"/>
</dbReference>
<dbReference type="Gene3D" id="3.40.1190.10">
    <property type="entry name" value="Mur-like, catalytic domain"/>
    <property type="match status" value="1"/>
</dbReference>
<dbReference type="Gene3D" id="3.40.50.720">
    <property type="entry name" value="NAD(P)-binding Rossmann-like Domain"/>
    <property type="match status" value="1"/>
</dbReference>
<dbReference type="HAMAP" id="MF_00046">
    <property type="entry name" value="MurC"/>
    <property type="match status" value="1"/>
</dbReference>
<dbReference type="InterPro" id="IPR036565">
    <property type="entry name" value="Mur-like_cat_sf"/>
</dbReference>
<dbReference type="InterPro" id="IPR004101">
    <property type="entry name" value="Mur_ligase_C"/>
</dbReference>
<dbReference type="InterPro" id="IPR036615">
    <property type="entry name" value="Mur_ligase_C_dom_sf"/>
</dbReference>
<dbReference type="InterPro" id="IPR013221">
    <property type="entry name" value="Mur_ligase_cen"/>
</dbReference>
<dbReference type="InterPro" id="IPR000713">
    <property type="entry name" value="Mur_ligase_N"/>
</dbReference>
<dbReference type="InterPro" id="IPR050061">
    <property type="entry name" value="MurCDEF_pg_biosynth"/>
</dbReference>
<dbReference type="InterPro" id="IPR005758">
    <property type="entry name" value="UDP-N-AcMur_Ala_ligase_MurC"/>
</dbReference>
<dbReference type="NCBIfam" id="TIGR01082">
    <property type="entry name" value="murC"/>
    <property type="match status" value="1"/>
</dbReference>
<dbReference type="PANTHER" id="PTHR43445:SF3">
    <property type="entry name" value="UDP-N-ACETYLMURAMATE--L-ALANINE LIGASE"/>
    <property type="match status" value="1"/>
</dbReference>
<dbReference type="PANTHER" id="PTHR43445">
    <property type="entry name" value="UDP-N-ACETYLMURAMATE--L-ALANINE LIGASE-RELATED"/>
    <property type="match status" value="1"/>
</dbReference>
<dbReference type="Pfam" id="PF01225">
    <property type="entry name" value="Mur_ligase"/>
    <property type="match status" value="1"/>
</dbReference>
<dbReference type="Pfam" id="PF02875">
    <property type="entry name" value="Mur_ligase_C"/>
    <property type="match status" value="1"/>
</dbReference>
<dbReference type="Pfam" id="PF08245">
    <property type="entry name" value="Mur_ligase_M"/>
    <property type="match status" value="1"/>
</dbReference>
<dbReference type="SUPFAM" id="SSF51984">
    <property type="entry name" value="MurCD N-terminal domain"/>
    <property type="match status" value="1"/>
</dbReference>
<dbReference type="SUPFAM" id="SSF53623">
    <property type="entry name" value="MurD-like peptide ligases, catalytic domain"/>
    <property type="match status" value="1"/>
</dbReference>
<dbReference type="SUPFAM" id="SSF53244">
    <property type="entry name" value="MurD-like peptide ligases, peptide-binding domain"/>
    <property type="match status" value="1"/>
</dbReference>
<name>MURC_YERPP</name>
<reference key="1">
    <citation type="submission" date="2007-02" db="EMBL/GenBank/DDBJ databases">
        <title>Complete sequence of chromosome of Yersinia pestis Pestoides F.</title>
        <authorList>
            <consortium name="US DOE Joint Genome Institute"/>
            <person name="Copeland A."/>
            <person name="Lucas S."/>
            <person name="Lapidus A."/>
            <person name="Barry K."/>
            <person name="Detter J.C."/>
            <person name="Glavina del Rio T."/>
            <person name="Hammon N."/>
            <person name="Israni S."/>
            <person name="Dalin E."/>
            <person name="Tice H."/>
            <person name="Pitluck S."/>
            <person name="Di Bartolo G."/>
            <person name="Chain P."/>
            <person name="Malfatti S."/>
            <person name="Shin M."/>
            <person name="Vergez L."/>
            <person name="Schmutz J."/>
            <person name="Larimer F."/>
            <person name="Land M."/>
            <person name="Hauser L."/>
            <person name="Worsham P."/>
            <person name="Chu M."/>
            <person name="Bearden S."/>
            <person name="Garcia E."/>
            <person name="Richardson P."/>
        </authorList>
    </citation>
    <scope>NUCLEOTIDE SEQUENCE [LARGE SCALE GENOMIC DNA]</scope>
    <source>
        <strain>Pestoides F</strain>
    </source>
</reference>
<proteinExistence type="inferred from homology"/>
<comment type="function">
    <text evidence="1">Cell wall formation.</text>
</comment>
<comment type="catalytic activity">
    <reaction evidence="1">
        <text>UDP-N-acetyl-alpha-D-muramate + L-alanine + ATP = UDP-N-acetyl-alpha-D-muramoyl-L-alanine + ADP + phosphate + H(+)</text>
        <dbReference type="Rhea" id="RHEA:23372"/>
        <dbReference type="ChEBI" id="CHEBI:15378"/>
        <dbReference type="ChEBI" id="CHEBI:30616"/>
        <dbReference type="ChEBI" id="CHEBI:43474"/>
        <dbReference type="ChEBI" id="CHEBI:57972"/>
        <dbReference type="ChEBI" id="CHEBI:70757"/>
        <dbReference type="ChEBI" id="CHEBI:83898"/>
        <dbReference type="ChEBI" id="CHEBI:456216"/>
        <dbReference type="EC" id="6.3.2.8"/>
    </reaction>
</comment>
<comment type="pathway">
    <text evidence="1">Cell wall biogenesis; peptidoglycan biosynthesis.</text>
</comment>
<comment type="subcellular location">
    <subcellularLocation>
        <location evidence="1">Cytoplasm</location>
    </subcellularLocation>
</comment>
<comment type="similarity">
    <text evidence="1">Belongs to the MurCDEF family.</text>
</comment>
<comment type="sequence caution" evidence="2">
    <conflict type="erroneous initiation">
        <sequence resource="EMBL-CDS" id="ABP41444"/>
    </conflict>
</comment>
<sequence>MNTQQLAKLRTIVPEMRRVRHIHFVGIGGAGMGGIAEVLANEGYQISGSDLAPNSVTQHLTALGAQIYFHHRPENVLDASVVVVSTAISADNPEIVAAREARIPVIRRAEMLAELMRYRHGIAVAGTHGKTTTTAMLSSIYAEAGLDPTFVNGGLVKAAGTHARLGSSRYLIAEADESDASFLHLQPMVAIVTNIEADHMDTYQGDFENLKQTFINFLHNLPFYGRAVMCIDDPVVRELLPRVGRHITTYGFSDDADVQIASYRQEGPQGHFTLRRQDKPLIEVTLNAPGRHNALNAAAAVAVATEEGIEDEDILRALVGFQGTGRRFDFLGNFPLAPVNGKEGSAMLVDDYGHHPTEVDATIKAARAGWPDKRIVMLFQPHRYTRTRDLYDDFANVLSQVDVLLMLDVYAAGEPPIPGADSRALCRTIRNRGKLDPILVPDSESAPEMLAQILNGEDLILVQGAGNIGKIARKLAEHKLQPQLKDEEHHG</sequence>
<evidence type="ECO:0000255" key="1">
    <source>
        <dbReference type="HAMAP-Rule" id="MF_00046"/>
    </source>
</evidence>
<evidence type="ECO:0000305" key="2"/>
<organism>
    <name type="scientific">Yersinia pestis (strain Pestoides F)</name>
    <dbReference type="NCBI Taxonomy" id="386656"/>
    <lineage>
        <taxon>Bacteria</taxon>
        <taxon>Pseudomonadati</taxon>
        <taxon>Pseudomonadota</taxon>
        <taxon>Gammaproteobacteria</taxon>
        <taxon>Enterobacterales</taxon>
        <taxon>Yersiniaceae</taxon>
        <taxon>Yersinia</taxon>
    </lineage>
</organism>
<gene>
    <name evidence="1" type="primary">murC</name>
    <name type="ordered locus">YPDSF_3086</name>
</gene>
<keyword id="KW-0067">ATP-binding</keyword>
<keyword id="KW-0131">Cell cycle</keyword>
<keyword id="KW-0132">Cell division</keyword>
<keyword id="KW-0133">Cell shape</keyword>
<keyword id="KW-0961">Cell wall biogenesis/degradation</keyword>
<keyword id="KW-0963">Cytoplasm</keyword>
<keyword id="KW-0436">Ligase</keyword>
<keyword id="KW-0547">Nucleotide-binding</keyword>
<keyword id="KW-0573">Peptidoglycan synthesis</keyword>
<protein>
    <recommendedName>
        <fullName evidence="1">UDP-N-acetylmuramate--L-alanine ligase</fullName>
        <ecNumber evidence="1">6.3.2.8</ecNumber>
    </recommendedName>
    <alternativeName>
        <fullName evidence="1">UDP-N-acetylmuramoyl-L-alanine synthetase</fullName>
    </alternativeName>
</protein>
<feature type="chain" id="PRO_0000336879" description="UDP-N-acetylmuramate--L-alanine ligase">
    <location>
        <begin position="1"/>
        <end position="491"/>
    </location>
</feature>
<feature type="binding site" evidence="1">
    <location>
        <begin position="126"/>
        <end position="132"/>
    </location>
    <ligand>
        <name>ATP</name>
        <dbReference type="ChEBI" id="CHEBI:30616"/>
    </ligand>
</feature>